<name>IL6_MUSPF</name>
<dbReference type="EMBL" id="EF368209">
    <property type="protein sequence ID" value="ABN12937.1"/>
    <property type="molecule type" value="mRNA"/>
</dbReference>
<dbReference type="EMBL" id="EF492063">
    <property type="protein sequence ID" value="ABP35938.1"/>
    <property type="molecule type" value="mRNA"/>
</dbReference>
<dbReference type="RefSeq" id="NP_001297098.1">
    <property type="nucleotide sequence ID" value="NM_001310169.1"/>
</dbReference>
<dbReference type="SMR" id="A3FBE9"/>
<dbReference type="FunCoup" id="A3FBE9">
    <property type="interactions" value="82"/>
</dbReference>
<dbReference type="STRING" id="9669.ENSMPUP00000013489"/>
<dbReference type="GeneID" id="101671465"/>
<dbReference type="CTD" id="3569"/>
<dbReference type="eggNOG" id="ENOG502S7Q4">
    <property type="taxonomic scope" value="Eukaryota"/>
</dbReference>
<dbReference type="HOGENOM" id="CLU_096521_0_0_1"/>
<dbReference type="InParanoid" id="A3FBE9"/>
<dbReference type="OMA" id="FSKCENS"/>
<dbReference type="OrthoDB" id="8943569at2759"/>
<dbReference type="Proteomes" id="UP000000715">
    <property type="component" value="Unplaced"/>
</dbReference>
<dbReference type="GO" id="GO:0005615">
    <property type="term" value="C:extracellular space"/>
    <property type="evidence" value="ECO:0007669"/>
    <property type="project" value="UniProtKB-KW"/>
</dbReference>
<dbReference type="GO" id="GO:0005896">
    <property type="term" value="C:interleukin-6 receptor complex"/>
    <property type="evidence" value="ECO:0007669"/>
    <property type="project" value="Ensembl"/>
</dbReference>
<dbReference type="GO" id="GO:0005125">
    <property type="term" value="F:cytokine activity"/>
    <property type="evidence" value="ECO:0007669"/>
    <property type="project" value="UniProtKB-KW"/>
</dbReference>
<dbReference type="GO" id="GO:0008083">
    <property type="term" value="F:growth factor activity"/>
    <property type="evidence" value="ECO:0007669"/>
    <property type="project" value="UniProtKB-KW"/>
</dbReference>
<dbReference type="GO" id="GO:0042802">
    <property type="term" value="F:identical protein binding"/>
    <property type="evidence" value="ECO:0007669"/>
    <property type="project" value="Ensembl"/>
</dbReference>
<dbReference type="GO" id="GO:0005138">
    <property type="term" value="F:interleukin-6 receptor binding"/>
    <property type="evidence" value="ECO:0007669"/>
    <property type="project" value="Ensembl"/>
</dbReference>
<dbReference type="GO" id="GO:0006953">
    <property type="term" value="P:acute-phase response"/>
    <property type="evidence" value="ECO:0007669"/>
    <property type="project" value="UniProtKB-KW"/>
</dbReference>
<dbReference type="GO" id="GO:0007259">
    <property type="term" value="P:cell surface receptor signaling pathway via JAK-STAT"/>
    <property type="evidence" value="ECO:0007669"/>
    <property type="project" value="Ensembl"/>
</dbReference>
<dbReference type="GO" id="GO:0070301">
    <property type="term" value="P:cellular response to hydrogen peroxide"/>
    <property type="evidence" value="ECO:0007669"/>
    <property type="project" value="Ensembl"/>
</dbReference>
<dbReference type="GO" id="GO:0071222">
    <property type="term" value="P:cellular response to lipopolysaccharide"/>
    <property type="evidence" value="ECO:0007669"/>
    <property type="project" value="Ensembl"/>
</dbReference>
<dbReference type="GO" id="GO:0051607">
    <property type="term" value="P:defense response to virus"/>
    <property type="evidence" value="ECO:0007669"/>
    <property type="project" value="Ensembl"/>
</dbReference>
<dbReference type="GO" id="GO:0042593">
    <property type="term" value="P:glucose homeostasis"/>
    <property type="evidence" value="ECO:0000250"/>
    <property type="project" value="UniProtKB"/>
</dbReference>
<dbReference type="GO" id="GO:0002384">
    <property type="term" value="P:hepatic immune response"/>
    <property type="evidence" value="ECO:0007669"/>
    <property type="project" value="Ensembl"/>
</dbReference>
<dbReference type="GO" id="GO:0072574">
    <property type="term" value="P:hepatocyte proliferation"/>
    <property type="evidence" value="ECO:0000250"/>
    <property type="project" value="UniProtKB"/>
</dbReference>
<dbReference type="GO" id="GO:0090594">
    <property type="term" value="P:inflammatory response to wounding"/>
    <property type="evidence" value="ECO:0007669"/>
    <property type="project" value="Ensembl"/>
</dbReference>
<dbReference type="GO" id="GO:0070102">
    <property type="term" value="P:interleukin-6-mediated signaling pathway"/>
    <property type="evidence" value="ECO:0000250"/>
    <property type="project" value="UniProtKB"/>
</dbReference>
<dbReference type="GO" id="GO:0097421">
    <property type="term" value="P:liver regeneration"/>
    <property type="evidence" value="ECO:0000250"/>
    <property type="project" value="UniProtKB"/>
</dbReference>
<dbReference type="GO" id="GO:0043066">
    <property type="term" value="P:negative regulation of apoptotic process"/>
    <property type="evidence" value="ECO:0007669"/>
    <property type="project" value="Ensembl"/>
</dbReference>
<dbReference type="GO" id="GO:0032966">
    <property type="term" value="P:negative regulation of collagen biosynthetic process"/>
    <property type="evidence" value="ECO:0007669"/>
    <property type="project" value="Ensembl"/>
</dbReference>
<dbReference type="GO" id="GO:2000635">
    <property type="term" value="P:negative regulation of primary miRNA processing"/>
    <property type="evidence" value="ECO:0007669"/>
    <property type="project" value="Ensembl"/>
</dbReference>
<dbReference type="GO" id="GO:0031175">
    <property type="term" value="P:neuron projection development"/>
    <property type="evidence" value="ECO:0007669"/>
    <property type="project" value="Ensembl"/>
</dbReference>
<dbReference type="GO" id="GO:0001781">
    <property type="term" value="P:neutrophil apoptotic process"/>
    <property type="evidence" value="ECO:0007669"/>
    <property type="project" value="Ensembl"/>
</dbReference>
<dbReference type="GO" id="GO:0002675">
    <property type="term" value="P:positive regulation of acute inflammatory response"/>
    <property type="evidence" value="ECO:0007669"/>
    <property type="project" value="Ensembl"/>
</dbReference>
<dbReference type="GO" id="GO:1902512">
    <property type="term" value="P:positive regulation of apoptotic DNA fragmentation"/>
    <property type="evidence" value="ECO:0007669"/>
    <property type="project" value="Ensembl"/>
</dbReference>
<dbReference type="GO" id="GO:0043065">
    <property type="term" value="P:positive regulation of apoptotic process"/>
    <property type="evidence" value="ECO:0007669"/>
    <property type="project" value="Ensembl"/>
</dbReference>
<dbReference type="GO" id="GO:0050871">
    <property type="term" value="P:positive regulation of B cell activation"/>
    <property type="evidence" value="ECO:0007669"/>
    <property type="project" value="Ensembl"/>
</dbReference>
<dbReference type="GO" id="GO:0032722">
    <property type="term" value="P:positive regulation of chemokine production"/>
    <property type="evidence" value="ECO:0007669"/>
    <property type="project" value="Ensembl"/>
</dbReference>
<dbReference type="GO" id="GO:1900017">
    <property type="term" value="P:positive regulation of cytokine production involved in inflammatory response"/>
    <property type="evidence" value="ECO:0007669"/>
    <property type="project" value="Ensembl"/>
</dbReference>
<dbReference type="GO" id="GO:0010718">
    <property type="term" value="P:positive regulation of epithelial to mesenchymal transition"/>
    <property type="evidence" value="ECO:0007669"/>
    <property type="project" value="Ensembl"/>
</dbReference>
<dbReference type="GO" id="GO:0090091">
    <property type="term" value="P:positive regulation of extracellular matrix disassembly"/>
    <property type="evidence" value="ECO:0007669"/>
    <property type="project" value="Ensembl"/>
</dbReference>
<dbReference type="GO" id="GO:0060252">
    <property type="term" value="P:positive regulation of glial cell proliferation"/>
    <property type="evidence" value="ECO:0007669"/>
    <property type="project" value="Ensembl"/>
</dbReference>
<dbReference type="GO" id="GO:0002639">
    <property type="term" value="P:positive regulation of immunoglobulin production"/>
    <property type="evidence" value="ECO:0007669"/>
    <property type="project" value="Ensembl"/>
</dbReference>
<dbReference type="GO" id="GO:0032731">
    <property type="term" value="P:positive regulation of interleukin-1 beta production"/>
    <property type="evidence" value="ECO:0007669"/>
    <property type="project" value="Ensembl"/>
</dbReference>
<dbReference type="GO" id="GO:0032733">
    <property type="term" value="P:positive regulation of interleukin-10 production"/>
    <property type="evidence" value="ECO:0007669"/>
    <property type="project" value="Ensembl"/>
</dbReference>
<dbReference type="GO" id="GO:0032755">
    <property type="term" value="P:positive regulation of interleukin-6 production"/>
    <property type="evidence" value="ECO:0007669"/>
    <property type="project" value="Ensembl"/>
</dbReference>
<dbReference type="GO" id="GO:0032757">
    <property type="term" value="P:positive regulation of interleukin-8 production"/>
    <property type="evidence" value="ECO:0007669"/>
    <property type="project" value="Ensembl"/>
</dbReference>
<dbReference type="GO" id="GO:1904996">
    <property type="term" value="P:positive regulation of leukocyte adhesion to vascular endothelial cell"/>
    <property type="evidence" value="ECO:0007669"/>
    <property type="project" value="Ensembl"/>
</dbReference>
<dbReference type="GO" id="GO:0043410">
    <property type="term" value="P:positive regulation of MAPK cascade"/>
    <property type="evidence" value="ECO:0007669"/>
    <property type="project" value="Ensembl"/>
</dbReference>
<dbReference type="GO" id="GO:1902895">
    <property type="term" value="P:positive regulation of miRNA transcription"/>
    <property type="evidence" value="ECO:0007669"/>
    <property type="project" value="Ensembl"/>
</dbReference>
<dbReference type="GO" id="GO:1901731">
    <property type="term" value="P:positive regulation of platelet aggregation"/>
    <property type="evidence" value="ECO:0007669"/>
    <property type="project" value="Ensembl"/>
</dbReference>
<dbReference type="GO" id="GO:0046427">
    <property type="term" value="P:positive regulation of receptor signaling pathway via JAK-STAT"/>
    <property type="evidence" value="ECO:0007669"/>
    <property type="project" value="Ensembl"/>
</dbReference>
<dbReference type="GO" id="GO:1904894">
    <property type="term" value="P:positive regulation of receptor signaling pathway via STAT"/>
    <property type="evidence" value="ECO:0000250"/>
    <property type="project" value="UniProtKB"/>
</dbReference>
<dbReference type="GO" id="GO:0048661">
    <property type="term" value="P:positive regulation of smooth muscle cell proliferation"/>
    <property type="evidence" value="ECO:0007669"/>
    <property type="project" value="Ensembl"/>
</dbReference>
<dbReference type="GO" id="GO:0042102">
    <property type="term" value="P:positive regulation of T cell proliferation"/>
    <property type="evidence" value="ECO:0007669"/>
    <property type="project" value="Ensembl"/>
</dbReference>
<dbReference type="GO" id="GO:0045944">
    <property type="term" value="P:positive regulation of transcription by RNA polymerase II"/>
    <property type="evidence" value="ECO:0007669"/>
    <property type="project" value="Ensembl"/>
</dbReference>
<dbReference type="GO" id="GO:0045727">
    <property type="term" value="P:positive regulation of translation"/>
    <property type="evidence" value="ECO:0007669"/>
    <property type="project" value="Ensembl"/>
</dbReference>
<dbReference type="GO" id="GO:0032760">
    <property type="term" value="P:positive regulation of tumor necrosis factor production"/>
    <property type="evidence" value="ECO:0007669"/>
    <property type="project" value="Ensembl"/>
</dbReference>
<dbReference type="GO" id="GO:0010575">
    <property type="term" value="P:positive regulation of vascular endothelial growth factor production"/>
    <property type="evidence" value="ECO:0007669"/>
    <property type="project" value="Ensembl"/>
</dbReference>
<dbReference type="GO" id="GO:0070092">
    <property type="term" value="P:regulation of glucagon secretion"/>
    <property type="evidence" value="ECO:0000250"/>
    <property type="project" value="UniProtKB"/>
</dbReference>
<dbReference type="GO" id="GO:0050796">
    <property type="term" value="P:regulation of insulin secretion"/>
    <property type="evidence" value="ECO:0000250"/>
    <property type="project" value="UniProtKB"/>
</dbReference>
<dbReference type="GO" id="GO:0014823">
    <property type="term" value="P:response to activity"/>
    <property type="evidence" value="ECO:0000250"/>
    <property type="project" value="UniProtKB"/>
</dbReference>
<dbReference type="GO" id="GO:0051384">
    <property type="term" value="P:response to glucocorticoid"/>
    <property type="evidence" value="ECO:0007669"/>
    <property type="project" value="Ensembl"/>
</dbReference>
<dbReference type="GO" id="GO:0072540">
    <property type="term" value="P:T-helper 17 cell lineage commitment"/>
    <property type="evidence" value="ECO:0000250"/>
    <property type="project" value="UniProtKB"/>
</dbReference>
<dbReference type="GO" id="GO:0010573">
    <property type="term" value="P:vascular endothelial growth factor production"/>
    <property type="evidence" value="ECO:0000250"/>
    <property type="project" value="UniProtKB"/>
</dbReference>
<dbReference type="FunFam" id="1.20.1250.10:FF:000006">
    <property type="entry name" value="Interleukin-6"/>
    <property type="match status" value="1"/>
</dbReference>
<dbReference type="Gene3D" id="1.20.1250.10">
    <property type="match status" value="1"/>
</dbReference>
<dbReference type="InterPro" id="IPR009079">
    <property type="entry name" value="4_helix_cytokine-like_core"/>
</dbReference>
<dbReference type="InterPro" id="IPR003574">
    <property type="entry name" value="IL-6-like"/>
</dbReference>
<dbReference type="InterPro" id="IPR030474">
    <property type="entry name" value="IL-6/GCSF/MGF"/>
</dbReference>
<dbReference type="InterPro" id="IPR030473">
    <property type="entry name" value="IL6/GCSF/MGF_CS"/>
</dbReference>
<dbReference type="PANTHER" id="PTHR48494">
    <property type="entry name" value="INTERLEUKIN-6"/>
    <property type="match status" value="1"/>
</dbReference>
<dbReference type="PANTHER" id="PTHR48494:SF1">
    <property type="entry name" value="INTERLEUKIN-6"/>
    <property type="match status" value="1"/>
</dbReference>
<dbReference type="Pfam" id="PF00489">
    <property type="entry name" value="IL6"/>
    <property type="match status" value="1"/>
</dbReference>
<dbReference type="PIRSF" id="PIRSF001935">
    <property type="entry name" value="IL6_MGF_GCSF"/>
    <property type="match status" value="1"/>
</dbReference>
<dbReference type="PRINTS" id="PR00433">
    <property type="entry name" value="IL6GCSFMGF"/>
</dbReference>
<dbReference type="PRINTS" id="PR00434">
    <property type="entry name" value="INTERLEUKIN6"/>
</dbReference>
<dbReference type="SMART" id="SM00126">
    <property type="entry name" value="IL6"/>
    <property type="match status" value="1"/>
</dbReference>
<dbReference type="SUPFAM" id="SSF47266">
    <property type="entry name" value="4-helical cytokines"/>
    <property type="match status" value="1"/>
</dbReference>
<dbReference type="PROSITE" id="PS00254">
    <property type="entry name" value="INTERLEUKIN_6"/>
    <property type="match status" value="1"/>
</dbReference>
<proteinExistence type="evidence at transcript level"/>
<keyword id="KW-0011">Acute phase</keyword>
<keyword id="KW-0202">Cytokine</keyword>
<keyword id="KW-1015">Disulfide bond</keyword>
<keyword id="KW-0339">Growth factor</keyword>
<keyword id="KW-0597">Phosphoprotein</keyword>
<keyword id="KW-1185">Reference proteome</keyword>
<keyword id="KW-0964">Secreted</keyword>
<keyword id="KW-0732">Signal</keyword>
<organism>
    <name type="scientific">Mustela putorius furo</name>
    <name type="common">European domestic ferret</name>
    <name type="synonym">Mustela furo</name>
    <dbReference type="NCBI Taxonomy" id="9669"/>
    <lineage>
        <taxon>Eukaryota</taxon>
        <taxon>Metazoa</taxon>
        <taxon>Chordata</taxon>
        <taxon>Craniata</taxon>
        <taxon>Vertebrata</taxon>
        <taxon>Euteleostomi</taxon>
        <taxon>Mammalia</taxon>
        <taxon>Eutheria</taxon>
        <taxon>Laurasiatheria</taxon>
        <taxon>Carnivora</taxon>
        <taxon>Caniformia</taxon>
        <taxon>Musteloidea</taxon>
        <taxon>Mustelidae</taxon>
        <taxon>Mustelinae</taxon>
        <taxon>Mustela</taxon>
    </lineage>
</organism>
<evidence type="ECO:0000250" key="1"/>
<evidence type="ECO:0000250" key="2">
    <source>
        <dbReference type="UniProtKB" id="P05231"/>
    </source>
</evidence>
<evidence type="ECO:0000250" key="3">
    <source>
        <dbReference type="UniProtKB" id="P08505"/>
    </source>
</evidence>
<evidence type="ECO:0000255" key="4"/>
<evidence type="ECO:0000305" key="5"/>
<sequence>MNSLSTSAFSPVAFSLGLLLVMATAFPTPGPLGGDSKDDATSNRPPLTSADKMEDFIRFILGKISALKKEMCEKYNKCEDSKEALAENNLNLPKLAEEDKCFQSQFNQETCLTRITTGLQEFQIHLKYLEANYEGNKNNAHSVYISTKHLLQKLRPMNRVEVTTPDPTTDSSLQALFKSQDKWLKHVTIHLILRSLEDFLQFSLRAIRIM</sequence>
<feature type="signal peptide" evidence="4">
    <location>
        <begin position="1"/>
        <end position="25"/>
    </location>
</feature>
<feature type="chain" id="PRO_0000311674" description="Interleukin-6">
    <location>
        <begin position="26"/>
        <end position="210"/>
    </location>
</feature>
<feature type="modified residue" description="Phosphoserine" evidence="2">
    <location>
        <position position="81"/>
    </location>
</feature>
<feature type="disulfide bond" evidence="1">
    <location>
        <begin position="72"/>
        <end position="78"/>
    </location>
</feature>
<feature type="disulfide bond" evidence="1">
    <location>
        <begin position="101"/>
        <end position="111"/>
    </location>
</feature>
<protein>
    <recommendedName>
        <fullName>Interleukin-6</fullName>
        <shortName>IL-6</shortName>
    </recommendedName>
</protein>
<reference key="1">
    <citation type="journal article" date="2007" name="Virology">
        <title>Early cytokine mRNA expression profiles predict Morbillivirus disease outcome in ferrets.</title>
        <authorList>
            <person name="Svitek N."/>
            <person name="von Messling V."/>
        </authorList>
    </citation>
    <scope>NUCLEOTIDE SEQUENCE [MRNA]</scope>
</reference>
<reference key="2">
    <citation type="submission" date="2007-03" db="EMBL/GenBank/DDBJ databases">
        <title>Cloning and expression of ferret IFN-a, IL-4, IL-6.</title>
        <authorList>
            <person name="Danesh A."/>
            <person name="Seneviratne C."/>
            <person name="DeVries M.E."/>
            <person name="Banner D."/>
            <person name="Rowe T."/>
            <person name="Xu L."/>
            <person name="Ran L."/>
            <person name="Bosinger S.E."/>
            <person name="Jonsson C.B."/>
            <person name="Cameron C.M."/>
            <person name="Kelvin D.J."/>
        </authorList>
    </citation>
    <scope>NUCLEOTIDE SEQUENCE [MRNA]</scope>
</reference>
<comment type="function">
    <text evidence="2">Cytokine with a wide variety of biological functions in immunity, tissue regeneration, and metabolism. Binds to IL6R, then the complex associates to the signaling subunit IL6ST/gp130 to trigger the intracellular IL6-signaling pathway. The interaction with the membrane-bound IL6R and IL6ST stimulates 'classic signaling', whereas the binding of IL6 and soluble IL6R to IL6ST stimulates 'trans-signaling'. Alternatively, 'cluster signaling' occurs when membrane-bound IL6:IL6R complexes on transmitter cells activate IL6ST receptors on neighboring receiver cells.</text>
</comment>
<comment type="function">
    <text evidence="2 3">IL6 is a potent inducer of the acute phase response. Rapid production of IL6 contributes to host defense during infection and tissue injury, but excessive IL6 synthesis is involved in disease pathology. In the innate immune response, is synthesized by myeloid cells, such as macrophages and dendritic cells, upon recognition of pathogens through toll-like receptors (TLRs) at the site of infection or tissue injury (By similarity). In the adaptive immune response, is required for the differentiation of B cells into immunoglobulin-secreting cells. Plays a major role in the differentiation of CD4(+) T cell subsets. Essential factor for the development of T follicular helper (Tfh) cells that are required for the induction of germinal-center formation. Required to drive naive CD4(+) T cells to the Th17 lineage. Also required for proliferation of myeloma cells and the survival of plasmablast cells (By similarity).</text>
</comment>
<comment type="function">
    <text evidence="2 3">Acts as an essential factor in bone homeostasis and on vessels directly or indirectly by induction of VEGF, resulting in increased angiogenesis activity and vascular permeability. Induces, through 'trans-signaling' and synergistically with IL1B and TNF, the production of VEGF. Involved in metabolic controls, is discharged into the bloodstream after muscle contraction increasing lipolysis and improving insulin resistance (By similarity). 'Trans-signaling' in central nervous system also regulates energy and glucose homeostasis. Mediates, through GLP-1, crosstalk between insulin-sensitive tissues, intestinal L cells and pancreatic islets to adapt to changes in insulin demand (By similarity). Also acts as a myokine (By similarity). Plays a protective role during liver injury, being required for maintenance of tissue regeneration (By similarity). Also has a pivotal role in iron metabolism by regulating HAMP/hepcidin expression upon inflammation or bacterial infection (By similarity). Through activation of IL6ST-YAP-NOTCH pathway, induces inflammation-induced epithelial regeneration (By similarity).</text>
</comment>
<comment type="subunit">
    <text evidence="2">Component of a hexamer of two molecules each of IL6, IL6R and IL6ST; first binds to IL6R to associate with the signaling subunit IL6ST. Interacts with IL6R (via the N-terminal ectodomain); this interaction may be affected by IL6R-binding with SORL1, hence decreasing IL6 cis signaling. Interacts with SORL1 (via the N-terminal ectodomain); this interaction leads to IL6 internalization and lysosomal degradation. May form a trimeric complex with the soluble SORL1 ectodomain and soluble IL6R receptor; this interaction might stabilize circulating IL6, hence promoting IL6 trans signaling.</text>
</comment>
<comment type="subcellular location">
    <subcellularLocation>
        <location evidence="2">Secreted</location>
    </subcellularLocation>
</comment>
<comment type="similarity">
    <text evidence="5">Belongs to the IL-6 superfamily.</text>
</comment>
<gene>
    <name type="primary">IL6</name>
</gene>
<accession>A3FBE9</accession>